<accession>Q8GW05</accession>
<accession>A0A0P0X240</accession>
<organism>
    <name type="scientific">Oryza sativa subsp. japonica</name>
    <name type="common">Rice</name>
    <dbReference type="NCBI Taxonomy" id="39947"/>
    <lineage>
        <taxon>Eukaryota</taxon>
        <taxon>Viridiplantae</taxon>
        <taxon>Streptophyta</taxon>
        <taxon>Embryophyta</taxon>
        <taxon>Tracheophyta</taxon>
        <taxon>Spermatophyta</taxon>
        <taxon>Magnoliopsida</taxon>
        <taxon>Liliopsida</taxon>
        <taxon>Poales</taxon>
        <taxon>Poaceae</taxon>
        <taxon>BOP clade</taxon>
        <taxon>Oryzoideae</taxon>
        <taxon>Oryzeae</taxon>
        <taxon>Oryzinae</taxon>
        <taxon>Oryza</taxon>
        <taxon>Oryza sativa</taxon>
    </lineage>
</organism>
<evidence type="ECO:0000255" key="1">
    <source>
        <dbReference type="PROSITE-ProRule" id="PRU00723"/>
    </source>
</evidence>
<evidence type="ECO:0000256" key="2">
    <source>
        <dbReference type="SAM" id="MobiDB-lite"/>
    </source>
</evidence>
<evidence type="ECO:0000305" key="3"/>
<gene>
    <name type="ordered locus">Os07g0138400</name>
    <name type="ordered locus">LOC_Os07g04580</name>
    <name type="ORF">OJ1417_E01.106</name>
    <name type="ORF">OsJ_022124</name>
    <name type="ORF">P0495H05.46</name>
</gene>
<keyword id="KW-0238">DNA-binding</keyword>
<keyword id="KW-0479">Metal-binding</keyword>
<keyword id="KW-1185">Reference proteome</keyword>
<keyword id="KW-0677">Repeat</keyword>
<keyword id="KW-0862">Zinc</keyword>
<keyword id="KW-0863">Zinc-finger</keyword>
<feature type="chain" id="PRO_0000346841" description="Zinc finger CCCH domain-containing protein 47">
    <location>
        <begin position="1"/>
        <end position="388"/>
    </location>
</feature>
<feature type="zinc finger region" description="C3H1-type 1" evidence="1">
    <location>
        <begin position="321"/>
        <end position="348"/>
    </location>
</feature>
<feature type="zinc finger region" description="C3H1-type 2" evidence="1">
    <location>
        <begin position="359"/>
        <end position="388"/>
    </location>
</feature>
<feature type="region of interest" description="Disordered" evidence="2">
    <location>
        <begin position="1"/>
        <end position="130"/>
    </location>
</feature>
<feature type="region of interest" description="Disordered" evidence="2">
    <location>
        <begin position="144"/>
        <end position="282"/>
    </location>
</feature>
<feature type="compositionally biased region" description="Basic and acidic residues" evidence="2">
    <location>
        <begin position="61"/>
        <end position="109"/>
    </location>
</feature>
<feature type="compositionally biased region" description="Basic and acidic residues" evidence="2">
    <location>
        <begin position="181"/>
        <end position="193"/>
    </location>
</feature>
<feature type="compositionally biased region" description="Low complexity" evidence="2">
    <location>
        <begin position="260"/>
        <end position="274"/>
    </location>
</feature>
<feature type="sequence conflict" description="In Ref. 5; AK111433." evidence="3" ref="5">
    <original>D</original>
    <variation>V</variation>
    <location>
        <position position="53"/>
    </location>
</feature>
<feature type="sequence conflict" description="In Ref. 5; AK111433." evidence="3" ref="5">
    <original>A</original>
    <variation>D</variation>
    <location>
        <position position="269"/>
    </location>
</feature>
<sequence>MADPNGRRRLPTGDPDQANASPSRRVSAVDGVTGGEGRPTYSHFPPGAYEPTDVAYGIRDAANDERARARARARHDQGGGAHDHHHDRPRQDQRGEAHLHDLPGEKSEVPDVGPSDQQGKEASDTDMAPLAALAKRSYDVNFPPLHEHRAAPFPAPAPAFAPAPAGTMGSSSAQVQGDGAPDNHDHDPRHLPRQDQSGGAHPDDLHGEKTIGSGSDILDDSKRGMINAGPQHGRITTSNGGSGSGSDKGKGVSYAGDKPASSSSSSSSAGQQGSDTDKTPSAAAASSYAVNFPPLLPAPAPVPAPAPAPAVAGAMGVANAHHKIALCSKWRKGRCHNGAACRYSHGEEEQRIVPEMRVGGGGRPCPELAAAKGWCRYGLNCKYCHGGV</sequence>
<name>C3H47_ORYSJ</name>
<protein>
    <recommendedName>
        <fullName>Zinc finger CCCH domain-containing protein 47</fullName>
        <shortName>OsC3H47</shortName>
    </recommendedName>
</protein>
<reference key="1">
    <citation type="journal article" date="2005" name="Nature">
        <title>The map-based sequence of the rice genome.</title>
        <authorList>
            <consortium name="International rice genome sequencing project (IRGSP)"/>
        </authorList>
    </citation>
    <scope>NUCLEOTIDE SEQUENCE [LARGE SCALE GENOMIC DNA]</scope>
    <source>
        <strain>cv. Nipponbare</strain>
    </source>
</reference>
<reference key="2">
    <citation type="journal article" date="2008" name="Nucleic Acids Res.">
        <title>The rice annotation project database (RAP-DB): 2008 update.</title>
        <authorList>
            <consortium name="The rice annotation project (RAP)"/>
        </authorList>
    </citation>
    <scope>GENOME REANNOTATION</scope>
    <source>
        <strain>cv. Nipponbare</strain>
    </source>
</reference>
<reference key="3">
    <citation type="journal article" date="2013" name="Rice">
        <title>Improvement of the Oryza sativa Nipponbare reference genome using next generation sequence and optical map data.</title>
        <authorList>
            <person name="Kawahara Y."/>
            <person name="de la Bastide M."/>
            <person name="Hamilton J.P."/>
            <person name="Kanamori H."/>
            <person name="McCombie W.R."/>
            <person name="Ouyang S."/>
            <person name="Schwartz D.C."/>
            <person name="Tanaka T."/>
            <person name="Wu J."/>
            <person name="Zhou S."/>
            <person name="Childs K.L."/>
            <person name="Davidson R.M."/>
            <person name="Lin H."/>
            <person name="Quesada-Ocampo L."/>
            <person name="Vaillancourt B."/>
            <person name="Sakai H."/>
            <person name="Lee S.S."/>
            <person name="Kim J."/>
            <person name="Numa H."/>
            <person name="Itoh T."/>
            <person name="Buell C.R."/>
            <person name="Matsumoto T."/>
        </authorList>
    </citation>
    <scope>GENOME REANNOTATION</scope>
    <source>
        <strain>cv. Nipponbare</strain>
    </source>
</reference>
<reference key="4">
    <citation type="journal article" date="2005" name="PLoS Biol.">
        <title>The genomes of Oryza sativa: a history of duplications.</title>
        <authorList>
            <person name="Yu J."/>
            <person name="Wang J."/>
            <person name="Lin W."/>
            <person name="Li S."/>
            <person name="Li H."/>
            <person name="Zhou J."/>
            <person name="Ni P."/>
            <person name="Dong W."/>
            <person name="Hu S."/>
            <person name="Zeng C."/>
            <person name="Zhang J."/>
            <person name="Zhang Y."/>
            <person name="Li R."/>
            <person name="Xu Z."/>
            <person name="Li S."/>
            <person name="Li X."/>
            <person name="Zheng H."/>
            <person name="Cong L."/>
            <person name="Lin L."/>
            <person name="Yin J."/>
            <person name="Geng J."/>
            <person name="Li G."/>
            <person name="Shi J."/>
            <person name="Liu J."/>
            <person name="Lv H."/>
            <person name="Li J."/>
            <person name="Wang J."/>
            <person name="Deng Y."/>
            <person name="Ran L."/>
            <person name="Shi X."/>
            <person name="Wang X."/>
            <person name="Wu Q."/>
            <person name="Li C."/>
            <person name="Ren X."/>
            <person name="Wang J."/>
            <person name="Wang X."/>
            <person name="Li D."/>
            <person name="Liu D."/>
            <person name="Zhang X."/>
            <person name="Ji Z."/>
            <person name="Zhao W."/>
            <person name="Sun Y."/>
            <person name="Zhang Z."/>
            <person name="Bao J."/>
            <person name="Han Y."/>
            <person name="Dong L."/>
            <person name="Ji J."/>
            <person name="Chen P."/>
            <person name="Wu S."/>
            <person name="Liu J."/>
            <person name="Xiao Y."/>
            <person name="Bu D."/>
            <person name="Tan J."/>
            <person name="Yang L."/>
            <person name="Ye C."/>
            <person name="Zhang J."/>
            <person name="Xu J."/>
            <person name="Zhou Y."/>
            <person name="Yu Y."/>
            <person name="Zhang B."/>
            <person name="Zhuang S."/>
            <person name="Wei H."/>
            <person name="Liu B."/>
            <person name="Lei M."/>
            <person name="Yu H."/>
            <person name="Li Y."/>
            <person name="Xu H."/>
            <person name="Wei S."/>
            <person name="He X."/>
            <person name="Fang L."/>
            <person name="Zhang Z."/>
            <person name="Zhang Y."/>
            <person name="Huang X."/>
            <person name="Su Z."/>
            <person name="Tong W."/>
            <person name="Li J."/>
            <person name="Tong Z."/>
            <person name="Li S."/>
            <person name="Ye J."/>
            <person name="Wang L."/>
            <person name="Fang L."/>
            <person name="Lei T."/>
            <person name="Chen C.-S."/>
            <person name="Chen H.-C."/>
            <person name="Xu Z."/>
            <person name="Li H."/>
            <person name="Huang H."/>
            <person name="Zhang F."/>
            <person name="Xu H."/>
            <person name="Li N."/>
            <person name="Zhao C."/>
            <person name="Li S."/>
            <person name="Dong L."/>
            <person name="Huang Y."/>
            <person name="Li L."/>
            <person name="Xi Y."/>
            <person name="Qi Q."/>
            <person name="Li W."/>
            <person name="Zhang B."/>
            <person name="Hu W."/>
            <person name="Zhang Y."/>
            <person name="Tian X."/>
            <person name="Jiao Y."/>
            <person name="Liang X."/>
            <person name="Jin J."/>
            <person name="Gao L."/>
            <person name="Zheng W."/>
            <person name="Hao B."/>
            <person name="Liu S.-M."/>
            <person name="Wang W."/>
            <person name="Yuan L."/>
            <person name="Cao M."/>
            <person name="McDermott J."/>
            <person name="Samudrala R."/>
            <person name="Wang J."/>
            <person name="Wong G.K.-S."/>
            <person name="Yang H."/>
        </authorList>
    </citation>
    <scope>NUCLEOTIDE SEQUENCE [LARGE SCALE GENOMIC DNA]</scope>
    <source>
        <strain>cv. Nipponbare</strain>
    </source>
</reference>
<reference key="5">
    <citation type="journal article" date="2003" name="Science">
        <title>Collection, mapping, and annotation of over 28,000 cDNA clones from japonica rice.</title>
        <authorList>
            <consortium name="The rice full-length cDNA consortium"/>
        </authorList>
    </citation>
    <scope>NUCLEOTIDE SEQUENCE [LARGE SCALE MRNA]</scope>
    <source>
        <strain>cv. Nipponbare</strain>
    </source>
</reference>
<reference key="6">
    <citation type="journal article" date="2008" name="BMC Genomics">
        <title>Genome-wide analysis of CCCH zinc finger family in Arabidopsis and rice.</title>
        <authorList>
            <person name="Wang D."/>
            <person name="Guo Y."/>
            <person name="Wu C."/>
            <person name="Yang G."/>
            <person name="Li Y."/>
            <person name="Zheng C."/>
        </authorList>
    </citation>
    <scope>NOMENCLATURE</scope>
</reference>
<dbReference type="EMBL" id="AP003829">
    <property type="protein sequence ID" value="BAC45044.1"/>
    <property type="molecule type" value="Genomic_DNA"/>
</dbReference>
<dbReference type="EMBL" id="AP004314">
    <property type="protein sequence ID" value="BAC83490.1"/>
    <property type="molecule type" value="Genomic_DNA"/>
</dbReference>
<dbReference type="EMBL" id="AP008213">
    <property type="protein sequence ID" value="BAF20772.1"/>
    <property type="molecule type" value="Genomic_DNA"/>
</dbReference>
<dbReference type="EMBL" id="AP014963">
    <property type="protein sequence ID" value="BAS99988.1"/>
    <property type="molecule type" value="Genomic_DNA"/>
</dbReference>
<dbReference type="EMBL" id="CM000144">
    <property type="protein sequence ID" value="EAZ38641.1"/>
    <property type="molecule type" value="Genomic_DNA"/>
</dbReference>
<dbReference type="EMBL" id="AK111433">
    <property type="status" value="NOT_ANNOTATED_CDS"/>
    <property type="molecule type" value="mRNA"/>
</dbReference>
<dbReference type="RefSeq" id="XP_015646504.1">
    <property type="nucleotide sequence ID" value="XM_015791018.1"/>
</dbReference>
<dbReference type="STRING" id="39947.Q8GW05"/>
<dbReference type="PaxDb" id="39947-Q8GW05"/>
<dbReference type="EnsemblPlants" id="Os07t0138400-01">
    <property type="protein sequence ID" value="Os07t0138400-01"/>
    <property type="gene ID" value="Os07g0138400"/>
</dbReference>
<dbReference type="Gramene" id="Os07t0138400-01">
    <property type="protein sequence ID" value="Os07t0138400-01"/>
    <property type="gene ID" value="Os07g0138400"/>
</dbReference>
<dbReference type="HOGENOM" id="CLU_700922_0_0_1"/>
<dbReference type="InParanoid" id="Q8GW05"/>
<dbReference type="OMA" id="GACRYSH"/>
<dbReference type="OrthoDB" id="411372at2759"/>
<dbReference type="Proteomes" id="UP000000763">
    <property type="component" value="Chromosome 7"/>
</dbReference>
<dbReference type="Proteomes" id="UP000007752">
    <property type="component" value="Chromosome 7"/>
</dbReference>
<dbReference type="Proteomes" id="UP000059680">
    <property type="component" value="Chromosome 7"/>
</dbReference>
<dbReference type="GO" id="GO:0003677">
    <property type="term" value="F:DNA binding"/>
    <property type="evidence" value="ECO:0007669"/>
    <property type="project" value="UniProtKB-KW"/>
</dbReference>
<dbReference type="GO" id="GO:0008270">
    <property type="term" value="F:zinc ion binding"/>
    <property type="evidence" value="ECO:0007669"/>
    <property type="project" value="UniProtKB-KW"/>
</dbReference>
<dbReference type="Gene3D" id="3.30.1370.210">
    <property type="match status" value="1"/>
</dbReference>
<dbReference type="InterPro" id="IPR000571">
    <property type="entry name" value="Znf_CCCH"/>
</dbReference>
<dbReference type="InterPro" id="IPR036855">
    <property type="entry name" value="Znf_CCCH_sf"/>
</dbReference>
<dbReference type="Pfam" id="PF00642">
    <property type="entry name" value="zf-CCCH"/>
    <property type="match status" value="1"/>
</dbReference>
<dbReference type="SMART" id="SM00356">
    <property type="entry name" value="ZnF_C3H1"/>
    <property type="match status" value="2"/>
</dbReference>
<dbReference type="SUPFAM" id="SSF90229">
    <property type="entry name" value="CCCH zinc finger"/>
    <property type="match status" value="1"/>
</dbReference>
<dbReference type="PROSITE" id="PS50103">
    <property type="entry name" value="ZF_C3H1"/>
    <property type="match status" value="2"/>
</dbReference>
<proteinExistence type="evidence at transcript level"/>